<feature type="chain" id="PRO_0000152956" description="GTP 3',8-cyclase">
    <location>
        <begin position="1"/>
        <end position="323"/>
    </location>
</feature>
<feature type="domain" description="Radical SAM core" evidence="2">
    <location>
        <begin position="4"/>
        <end position="233"/>
    </location>
</feature>
<feature type="binding site" evidence="1">
    <location>
        <position position="13"/>
    </location>
    <ligand>
        <name>GTP</name>
        <dbReference type="ChEBI" id="CHEBI:37565"/>
    </ligand>
</feature>
<feature type="binding site" evidence="1">
    <location>
        <position position="20"/>
    </location>
    <ligand>
        <name>[4Fe-4S] cluster</name>
        <dbReference type="ChEBI" id="CHEBI:49883"/>
        <label>1</label>
        <note>4Fe-4S-S-AdoMet</note>
    </ligand>
</feature>
<feature type="binding site" evidence="1">
    <location>
        <position position="24"/>
    </location>
    <ligand>
        <name>[4Fe-4S] cluster</name>
        <dbReference type="ChEBI" id="CHEBI:49883"/>
        <label>1</label>
        <note>4Fe-4S-S-AdoMet</note>
    </ligand>
</feature>
<feature type="binding site" evidence="1">
    <location>
        <position position="26"/>
    </location>
    <ligand>
        <name>S-adenosyl-L-methionine</name>
        <dbReference type="ChEBI" id="CHEBI:59789"/>
    </ligand>
</feature>
<feature type="binding site" evidence="1">
    <location>
        <position position="27"/>
    </location>
    <ligand>
        <name>[4Fe-4S] cluster</name>
        <dbReference type="ChEBI" id="CHEBI:49883"/>
        <label>1</label>
        <note>4Fe-4S-S-AdoMet</note>
    </ligand>
</feature>
<feature type="binding site" evidence="1">
    <location>
        <position position="63"/>
    </location>
    <ligand>
        <name>GTP</name>
        <dbReference type="ChEBI" id="CHEBI:37565"/>
    </ligand>
</feature>
<feature type="binding site" evidence="1">
    <location>
        <position position="67"/>
    </location>
    <ligand>
        <name>S-adenosyl-L-methionine</name>
        <dbReference type="ChEBI" id="CHEBI:59789"/>
    </ligand>
</feature>
<feature type="binding site" evidence="1">
    <location>
        <position position="94"/>
    </location>
    <ligand>
        <name>GTP</name>
        <dbReference type="ChEBI" id="CHEBI:37565"/>
    </ligand>
</feature>
<feature type="binding site" evidence="1">
    <location>
        <position position="118"/>
    </location>
    <ligand>
        <name>S-adenosyl-L-methionine</name>
        <dbReference type="ChEBI" id="CHEBI:59789"/>
    </ligand>
</feature>
<feature type="binding site" evidence="1">
    <location>
        <position position="154"/>
    </location>
    <ligand>
        <name>GTP</name>
        <dbReference type="ChEBI" id="CHEBI:37565"/>
    </ligand>
</feature>
<feature type="binding site" evidence="1">
    <location>
        <position position="188"/>
    </location>
    <ligand>
        <name>S-adenosyl-L-methionine</name>
        <dbReference type="ChEBI" id="CHEBI:59789"/>
    </ligand>
</feature>
<feature type="binding site" evidence="1">
    <location>
        <position position="250"/>
    </location>
    <ligand>
        <name>[4Fe-4S] cluster</name>
        <dbReference type="ChEBI" id="CHEBI:49883"/>
        <label>2</label>
        <note>4Fe-4S-substrate</note>
    </ligand>
</feature>
<feature type="binding site" evidence="1">
    <location>
        <position position="253"/>
    </location>
    <ligand>
        <name>[4Fe-4S] cluster</name>
        <dbReference type="ChEBI" id="CHEBI:49883"/>
        <label>2</label>
        <note>4Fe-4S-substrate</note>
    </ligand>
</feature>
<feature type="binding site" evidence="1">
    <location>
        <begin position="255"/>
        <end position="257"/>
    </location>
    <ligand>
        <name>GTP</name>
        <dbReference type="ChEBI" id="CHEBI:37565"/>
    </ligand>
</feature>
<feature type="binding site" evidence="1">
    <location>
        <position position="267"/>
    </location>
    <ligand>
        <name>[4Fe-4S] cluster</name>
        <dbReference type="ChEBI" id="CHEBI:49883"/>
        <label>2</label>
        <note>4Fe-4S-substrate</note>
    </ligand>
</feature>
<feature type="sequence conflict" description="In Ref. 1; BAA76928." evidence="3" ref="1">
    <original>CE</original>
    <variation>YK</variation>
    <location>
        <begin position="176"/>
        <end position="177"/>
    </location>
</feature>
<feature type="sequence conflict" description="In Ref. 1; BAA76928." evidence="3" ref="1">
    <original>T</original>
    <variation>P</variation>
    <location>
        <position position="220"/>
    </location>
</feature>
<proteinExistence type="inferred from homology"/>
<reference key="1">
    <citation type="journal article" date="1999" name="Microbiology">
        <title>Analysis of genes involved in nitrate reduction in Clostridium perfringens.</title>
        <authorList>
            <person name="Fujinaga K."/>
            <person name="Taniguchi Y."/>
            <person name="Sun Y."/>
            <person name="Katayama S."/>
            <person name="Minami J."/>
            <person name="Matsushita O."/>
            <person name="Okabe A."/>
        </authorList>
    </citation>
    <scope>NUCLEOTIDE SEQUENCE [GENOMIC DNA]</scope>
    <source>
        <strain>ATCC 10543 / DSM 798 / NCIB 8875 / BP6K / Type A</strain>
    </source>
</reference>
<reference key="2">
    <citation type="journal article" date="2002" name="Proc. Natl. Acad. Sci. U.S.A.">
        <title>Complete genome sequence of Clostridium perfringens, an anaerobic flesh-eater.</title>
        <authorList>
            <person name="Shimizu T."/>
            <person name="Ohtani K."/>
            <person name="Hirakawa H."/>
            <person name="Ohshima K."/>
            <person name="Yamashita A."/>
            <person name="Shiba T."/>
            <person name="Ogasawara N."/>
            <person name="Hattori M."/>
            <person name="Kuhara S."/>
            <person name="Hayashi H."/>
        </authorList>
    </citation>
    <scope>NUCLEOTIDE SEQUENCE [LARGE SCALE GENOMIC DNA]</scope>
    <source>
        <strain>13 / Type A</strain>
    </source>
</reference>
<evidence type="ECO:0000255" key="1">
    <source>
        <dbReference type="HAMAP-Rule" id="MF_01225"/>
    </source>
</evidence>
<evidence type="ECO:0000255" key="2">
    <source>
        <dbReference type="PROSITE-ProRule" id="PRU01266"/>
    </source>
</evidence>
<evidence type="ECO:0000305" key="3"/>
<dbReference type="EC" id="4.1.99.22" evidence="1"/>
<dbReference type="EMBL" id="AB017192">
    <property type="protein sequence ID" value="BAA76928.1"/>
    <property type="molecule type" value="Genomic_DNA"/>
</dbReference>
<dbReference type="EMBL" id="BA000016">
    <property type="protein sequence ID" value="BAB81496.1"/>
    <property type="molecule type" value="Genomic_DNA"/>
</dbReference>
<dbReference type="RefSeq" id="WP_011010607.1">
    <property type="nucleotide sequence ID" value="NC_003366.1"/>
</dbReference>
<dbReference type="SMR" id="Q9WX96"/>
<dbReference type="STRING" id="195102.gene:10491054"/>
<dbReference type="KEGG" id="cpe:CPE1790"/>
<dbReference type="HOGENOM" id="CLU_009273_0_1_9"/>
<dbReference type="UniPathway" id="UPA00344"/>
<dbReference type="Proteomes" id="UP000000818">
    <property type="component" value="Chromosome"/>
</dbReference>
<dbReference type="GO" id="GO:0051539">
    <property type="term" value="F:4 iron, 4 sulfur cluster binding"/>
    <property type="evidence" value="ECO:0007669"/>
    <property type="project" value="UniProtKB-UniRule"/>
</dbReference>
<dbReference type="GO" id="GO:0061799">
    <property type="term" value="F:cyclic pyranopterin monophosphate synthase activity"/>
    <property type="evidence" value="ECO:0007669"/>
    <property type="project" value="TreeGrafter"/>
</dbReference>
<dbReference type="GO" id="GO:0061798">
    <property type="term" value="F:GTP 3',8'-cyclase activity"/>
    <property type="evidence" value="ECO:0007669"/>
    <property type="project" value="UniProtKB-UniRule"/>
</dbReference>
<dbReference type="GO" id="GO:0005525">
    <property type="term" value="F:GTP binding"/>
    <property type="evidence" value="ECO:0007669"/>
    <property type="project" value="UniProtKB-UniRule"/>
</dbReference>
<dbReference type="GO" id="GO:0046872">
    <property type="term" value="F:metal ion binding"/>
    <property type="evidence" value="ECO:0007669"/>
    <property type="project" value="UniProtKB-KW"/>
</dbReference>
<dbReference type="GO" id="GO:1904047">
    <property type="term" value="F:S-adenosyl-L-methionine binding"/>
    <property type="evidence" value="ECO:0007669"/>
    <property type="project" value="UniProtKB-UniRule"/>
</dbReference>
<dbReference type="GO" id="GO:0006777">
    <property type="term" value="P:Mo-molybdopterin cofactor biosynthetic process"/>
    <property type="evidence" value="ECO:0007669"/>
    <property type="project" value="UniProtKB-UniRule"/>
</dbReference>
<dbReference type="CDD" id="cd01335">
    <property type="entry name" value="Radical_SAM"/>
    <property type="match status" value="1"/>
</dbReference>
<dbReference type="CDD" id="cd21117">
    <property type="entry name" value="Twitch_MoaA"/>
    <property type="match status" value="1"/>
</dbReference>
<dbReference type="Gene3D" id="3.20.20.70">
    <property type="entry name" value="Aldolase class I"/>
    <property type="match status" value="1"/>
</dbReference>
<dbReference type="HAMAP" id="MF_01225_B">
    <property type="entry name" value="MoaA_B"/>
    <property type="match status" value="1"/>
</dbReference>
<dbReference type="InterPro" id="IPR013785">
    <property type="entry name" value="Aldolase_TIM"/>
</dbReference>
<dbReference type="InterPro" id="IPR006638">
    <property type="entry name" value="Elp3/MiaA/NifB-like_rSAM"/>
</dbReference>
<dbReference type="InterPro" id="IPR013483">
    <property type="entry name" value="MoaA"/>
</dbReference>
<dbReference type="InterPro" id="IPR000385">
    <property type="entry name" value="MoaA_NifB_PqqE_Fe-S-bd_CS"/>
</dbReference>
<dbReference type="InterPro" id="IPR010505">
    <property type="entry name" value="MoaA_twitch"/>
</dbReference>
<dbReference type="InterPro" id="IPR050105">
    <property type="entry name" value="MoCo_biosynth_MoaA/MoaC"/>
</dbReference>
<dbReference type="InterPro" id="IPR007197">
    <property type="entry name" value="rSAM"/>
</dbReference>
<dbReference type="NCBIfam" id="TIGR02666">
    <property type="entry name" value="moaA"/>
    <property type="match status" value="1"/>
</dbReference>
<dbReference type="NCBIfam" id="NF001199">
    <property type="entry name" value="PRK00164.2-1"/>
    <property type="match status" value="1"/>
</dbReference>
<dbReference type="PANTHER" id="PTHR22960:SF0">
    <property type="entry name" value="MOLYBDENUM COFACTOR BIOSYNTHESIS PROTEIN 1"/>
    <property type="match status" value="1"/>
</dbReference>
<dbReference type="PANTHER" id="PTHR22960">
    <property type="entry name" value="MOLYBDOPTERIN COFACTOR SYNTHESIS PROTEIN A"/>
    <property type="match status" value="1"/>
</dbReference>
<dbReference type="Pfam" id="PF13353">
    <property type="entry name" value="Fer4_12"/>
    <property type="match status" value="1"/>
</dbReference>
<dbReference type="Pfam" id="PF06463">
    <property type="entry name" value="Mob_synth_C"/>
    <property type="match status" value="1"/>
</dbReference>
<dbReference type="Pfam" id="PF04055">
    <property type="entry name" value="Radical_SAM"/>
    <property type="match status" value="1"/>
</dbReference>
<dbReference type="SFLD" id="SFLDG01383">
    <property type="entry name" value="cyclic_pyranopterin_phosphate"/>
    <property type="match status" value="1"/>
</dbReference>
<dbReference type="SFLD" id="SFLDG01386">
    <property type="entry name" value="main_SPASM_domain-containing"/>
    <property type="match status" value="1"/>
</dbReference>
<dbReference type="SMART" id="SM00729">
    <property type="entry name" value="Elp3"/>
    <property type="match status" value="1"/>
</dbReference>
<dbReference type="SUPFAM" id="SSF102114">
    <property type="entry name" value="Radical SAM enzymes"/>
    <property type="match status" value="1"/>
</dbReference>
<dbReference type="PROSITE" id="PS01305">
    <property type="entry name" value="MOAA_NIFB_PQQE"/>
    <property type="match status" value="1"/>
</dbReference>
<dbReference type="PROSITE" id="PS51918">
    <property type="entry name" value="RADICAL_SAM"/>
    <property type="match status" value="1"/>
</dbReference>
<gene>
    <name evidence="1" type="primary">moaA</name>
    <name type="ordered locus">CPE1790</name>
</gene>
<comment type="function">
    <text evidence="1">Catalyzes the cyclization of GTP to (8S)-3',8-cyclo-7,8-dihydroguanosine 5'-triphosphate.</text>
</comment>
<comment type="catalytic activity">
    <reaction evidence="1">
        <text>GTP + AH2 + S-adenosyl-L-methionine = (8S)-3',8-cyclo-7,8-dihydroguanosine 5'-triphosphate + 5'-deoxyadenosine + L-methionine + A + H(+)</text>
        <dbReference type="Rhea" id="RHEA:49576"/>
        <dbReference type="ChEBI" id="CHEBI:13193"/>
        <dbReference type="ChEBI" id="CHEBI:15378"/>
        <dbReference type="ChEBI" id="CHEBI:17319"/>
        <dbReference type="ChEBI" id="CHEBI:17499"/>
        <dbReference type="ChEBI" id="CHEBI:37565"/>
        <dbReference type="ChEBI" id="CHEBI:57844"/>
        <dbReference type="ChEBI" id="CHEBI:59789"/>
        <dbReference type="ChEBI" id="CHEBI:131766"/>
        <dbReference type="EC" id="4.1.99.22"/>
    </reaction>
</comment>
<comment type="cofactor">
    <cofactor evidence="1">
        <name>[4Fe-4S] cluster</name>
        <dbReference type="ChEBI" id="CHEBI:49883"/>
    </cofactor>
    <text evidence="1">Binds 2 [4Fe-4S] clusters. Binds 1 [4Fe-4S] cluster coordinated with 3 cysteines and an exchangeable S-adenosyl-L-methionine and 1 [4Fe-4S] cluster coordinated with 3 cysteines and the GTP-derived substrate.</text>
</comment>
<comment type="pathway">
    <text evidence="1">Cofactor biosynthesis; molybdopterin biosynthesis.</text>
</comment>
<comment type="subunit">
    <text evidence="1">Monomer and homodimer.</text>
</comment>
<comment type="similarity">
    <text evidence="1">Belongs to the radical SAM superfamily. MoaA family.</text>
</comment>
<name>MOAA_CLOPE</name>
<protein>
    <recommendedName>
        <fullName evidence="1">GTP 3',8-cyclase</fullName>
        <ecNumber evidence="1">4.1.99.22</ecNumber>
    </recommendedName>
    <alternativeName>
        <fullName evidence="1">Molybdenum cofactor biosynthesis protein A</fullName>
    </alternativeName>
</protein>
<accession>Q9WX96</accession>
<keyword id="KW-0004">4Fe-4S</keyword>
<keyword id="KW-0342">GTP-binding</keyword>
<keyword id="KW-0408">Iron</keyword>
<keyword id="KW-0411">Iron-sulfur</keyword>
<keyword id="KW-0456">Lyase</keyword>
<keyword id="KW-0479">Metal-binding</keyword>
<keyword id="KW-0501">Molybdenum cofactor biosynthesis</keyword>
<keyword id="KW-0547">Nucleotide-binding</keyword>
<keyword id="KW-1185">Reference proteome</keyword>
<keyword id="KW-0949">S-adenosyl-L-methionine</keyword>
<sequence length="323" mass="37336">MKDKYGREIDYLRISLTDKCNLRCAYCMEKDHNDFIHNDKLMTLDEILRVVKECASIGIKKVRLTGGEPLVREGIVDLIKNINKIPEIEEICLTTNGILLGDKVKELSENGLKRVNISLDTLKEDRFKEITRIGTLDKVLYSIEKCLENNVKVKINTVILEDFNKDEILDLINLACENPIDLRFIELMPIGEGKKFKGVTNSEILEIIKKEKKVLSDGKTLRLNGPAKYISIEGFKGKIGFISAMSDCFCEDCNRIRVTPEGFMKQCLHWKYGINLRDKMRNGISDEELREIIKKSIYEKPEKHNFKMKEKDEDKRFMYEIGG</sequence>
<organism>
    <name type="scientific">Clostridium perfringens (strain 13 / Type A)</name>
    <dbReference type="NCBI Taxonomy" id="195102"/>
    <lineage>
        <taxon>Bacteria</taxon>
        <taxon>Bacillati</taxon>
        <taxon>Bacillota</taxon>
        <taxon>Clostridia</taxon>
        <taxon>Eubacteriales</taxon>
        <taxon>Clostridiaceae</taxon>
        <taxon>Clostridium</taxon>
    </lineage>
</organism>